<sequence>MTLNGNIMKYCLEKGEILISFLLIALESMFRICTVILPSPLRNWFYEQSKKVYSYFLPELLVDDNANKLTDARDTIDLCALHGYDLEEHFVRTTDGYLLGLHRVYKKKKGKIEELNYLPPVLFIHGLMMNSESWVCNLKKEDAIPFALVEQGYDVWLGNLRGNKYSIKNIKFSSQNPKFWDFSLDSIAIFDIPSIVKYILSVNSFDSISLVGFSQGAILAFAALSIDTELRNSVRAFIALAPAIAPKKYSGRTVKSIIHANSQLLYLMFGRNSMLGSAVFWQAVLYPPVFAKIVDLFLRFFLSWTGKNISETQKIVAYSHLYSFTSVKCFVHWAQITRRKVLQMYDDSPGFKPSYYTNLNRIARYPIENIRLPITLVYGSNDNMVDIETLKTQLPPLSQCIQIPNYEHLDIIMGDTKKDIVIQQVVEQLNHVIAGDYFESIKEEFGLDTELVDGVMNHTI</sequence>
<feature type="chain" id="PRO_0000312661" description="Probable lipase C14C8.15">
    <location>
        <begin position="1"/>
        <end position="460"/>
    </location>
</feature>
<feature type="topological domain" description="Cytoplasmic" evidence="3">
    <location>
        <begin position="1"/>
        <end position="16"/>
    </location>
</feature>
<feature type="transmembrane region" description="Helical; Signal-anchor for type II membrane protein" evidence="3">
    <location>
        <begin position="17"/>
        <end position="37"/>
    </location>
</feature>
<feature type="topological domain" description="Lumenal" evidence="3">
    <location>
        <begin position="38"/>
        <end position="460"/>
    </location>
</feature>
<feature type="active site" description="Nucleophile" evidence="1">
    <location>
        <position position="214"/>
    </location>
</feature>
<feature type="active site" description="Charge relay system" evidence="2">
    <location>
        <position position="382"/>
    </location>
</feature>
<feature type="active site" description="Charge relay system" evidence="2">
    <location>
        <position position="408"/>
    </location>
</feature>
<feature type="glycosylation site" description="N-linked (GlcNAc...) asparagine" evidence="3">
    <location>
        <position position="308"/>
    </location>
</feature>
<feature type="glycosylation site" description="N-linked (GlcNAc...) asparagine" evidence="3">
    <location>
        <position position="457"/>
    </location>
</feature>
<organism>
    <name type="scientific">Schizosaccharomyces pombe (strain 972 / ATCC 24843)</name>
    <name type="common">Fission yeast</name>
    <dbReference type="NCBI Taxonomy" id="284812"/>
    <lineage>
        <taxon>Eukaryota</taxon>
        <taxon>Fungi</taxon>
        <taxon>Dikarya</taxon>
        <taxon>Ascomycota</taxon>
        <taxon>Taphrinomycotina</taxon>
        <taxon>Schizosaccharomycetes</taxon>
        <taxon>Schizosaccharomycetales</taxon>
        <taxon>Schizosaccharomycetaceae</taxon>
        <taxon>Schizosaccharomyces</taxon>
    </lineage>
</organism>
<comment type="function">
    <text evidence="1">Probable lipase.</text>
</comment>
<comment type="subcellular location">
    <subcellularLocation>
        <location evidence="4">Golgi apparatus</location>
    </subcellularLocation>
    <subcellularLocation>
        <location evidence="3">Membrane</location>
        <topology evidence="5">Single-pass type II membrane protein</topology>
    </subcellularLocation>
</comment>
<comment type="similarity">
    <text evidence="5">Belongs to the AB hydrolase superfamily. Lipase family.</text>
</comment>
<protein>
    <recommendedName>
        <fullName>Probable lipase C14C8.15</fullName>
        <ecNumber>3.1.1.-</ecNumber>
    </recommendedName>
</protein>
<dbReference type="EC" id="3.1.1.-"/>
<dbReference type="EMBL" id="CU329671">
    <property type="protein sequence ID" value="CAA18432.1"/>
    <property type="molecule type" value="Genomic_DNA"/>
</dbReference>
<dbReference type="PIR" id="T39443">
    <property type="entry name" value="T39443"/>
</dbReference>
<dbReference type="RefSeq" id="NP_595918.1">
    <property type="nucleotide sequence ID" value="NM_001021826.2"/>
</dbReference>
<dbReference type="SMR" id="O60095"/>
<dbReference type="BioGRID" id="276390">
    <property type="interactions" value="13"/>
</dbReference>
<dbReference type="FunCoup" id="O60095">
    <property type="interactions" value="11"/>
</dbReference>
<dbReference type="STRING" id="284812.O60095"/>
<dbReference type="ESTHER" id="schpo-SPBC14C8.15">
    <property type="family name" value="Acidic_Lipase"/>
</dbReference>
<dbReference type="iPTMnet" id="O60095"/>
<dbReference type="PaxDb" id="4896-SPBC14C8.15.1"/>
<dbReference type="EnsemblFungi" id="SPBC14C8.15.1">
    <property type="protein sequence ID" value="SPBC14C8.15.1:pep"/>
    <property type="gene ID" value="SPBC14C8.15"/>
</dbReference>
<dbReference type="KEGG" id="spo:2539842"/>
<dbReference type="PomBase" id="SPBC14C8.15"/>
<dbReference type="VEuPathDB" id="FungiDB:SPBC14C8.15"/>
<dbReference type="eggNOG" id="KOG2624">
    <property type="taxonomic scope" value="Eukaryota"/>
</dbReference>
<dbReference type="HOGENOM" id="CLU_010974_5_0_1"/>
<dbReference type="InParanoid" id="O60095"/>
<dbReference type="OMA" id="GHMPTKA"/>
<dbReference type="PhylomeDB" id="O60095"/>
<dbReference type="Reactome" id="R-SPO-192456">
    <property type="pathway name" value="Digestion of dietary lipid"/>
</dbReference>
<dbReference type="Reactome" id="R-SPO-6809371">
    <property type="pathway name" value="Formation of the cornified envelope"/>
</dbReference>
<dbReference type="PRO" id="PR:O60095"/>
<dbReference type="Proteomes" id="UP000002485">
    <property type="component" value="Chromosome II"/>
</dbReference>
<dbReference type="GO" id="GO:0005737">
    <property type="term" value="C:cytoplasm"/>
    <property type="evidence" value="ECO:0007005"/>
    <property type="project" value="PomBase"/>
</dbReference>
<dbReference type="GO" id="GO:0005794">
    <property type="term" value="C:Golgi apparatus"/>
    <property type="evidence" value="ECO:0007005"/>
    <property type="project" value="PomBase"/>
</dbReference>
<dbReference type="GO" id="GO:0016020">
    <property type="term" value="C:membrane"/>
    <property type="evidence" value="ECO:0007669"/>
    <property type="project" value="UniProtKB-SubCell"/>
</dbReference>
<dbReference type="GO" id="GO:0004771">
    <property type="term" value="F:sterol ester esterase activity"/>
    <property type="evidence" value="ECO:0000318"/>
    <property type="project" value="GO_Central"/>
</dbReference>
<dbReference type="GO" id="GO:0008204">
    <property type="term" value="P:ergosterol metabolic process"/>
    <property type="evidence" value="ECO:0000266"/>
    <property type="project" value="PomBase"/>
</dbReference>
<dbReference type="GO" id="GO:0016042">
    <property type="term" value="P:lipid catabolic process"/>
    <property type="evidence" value="ECO:0007669"/>
    <property type="project" value="UniProtKB-KW"/>
</dbReference>
<dbReference type="GO" id="GO:0016125">
    <property type="term" value="P:sterol metabolic process"/>
    <property type="evidence" value="ECO:0000318"/>
    <property type="project" value="GO_Central"/>
</dbReference>
<dbReference type="FunFam" id="3.40.50.1820:FF:000095">
    <property type="entry name" value="Triglyceride lipase-cholesterol esterase"/>
    <property type="match status" value="1"/>
</dbReference>
<dbReference type="Gene3D" id="3.40.50.1820">
    <property type="entry name" value="alpha/beta hydrolase"/>
    <property type="match status" value="1"/>
</dbReference>
<dbReference type="InterPro" id="IPR029058">
    <property type="entry name" value="AB_hydrolase_fold"/>
</dbReference>
<dbReference type="InterPro" id="IPR006693">
    <property type="entry name" value="AB_hydrolase_lipase"/>
</dbReference>
<dbReference type="PANTHER" id="PTHR11005">
    <property type="entry name" value="LYSOSOMAL ACID LIPASE-RELATED"/>
    <property type="match status" value="1"/>
</dbReference>
<dbReference type="Pfam" id="PF04083">
    <property type="entry name" value="Abhydro_lipase"/>
    <property type="match status" value="1"/>
</dbReference>
<dbReference type="SUPFAM" id="SSF53474">
    <property type="entry name" value="alpha/beta-Hydrolases"/>
    <property type="match status" value="1"/>
</dbReference>
<proteinExistence type="inferred from homology"/>
<evidence type="ECO:0000250" key="1"/>
<evidence type="ECO:0000250" key="2">
    <source>
        <dbReference type="UniProtKB" id="P80035"/>
    </source>
</evidence>
<evidence type="ECO:0000255" key="3"/>
<evidence type="ECO:0000269" key="4">
    <source>
    </source>
</evidence>
<evidence type="ECO:0000305" key="5"/>
<evidence type="ECO:0000312" key="6">
    <source>
        <dbReference type="EMBL" id="CAA18432.1"/>
    </source>
</evidence>
<gene>
    <name type="ORF">SPBC14C8.15</name>
</gene>
<name>TGCE3_SCHPO</name>
<keyword id="KW-0325">Glycoprotein</keyword>
<keyword id="KW-0333">Golgi apparatus</keyword>
<keyword id="KW-0378">Hydrolase</keyword>
<keyword id="KW-0442">Lipid degradation</keyword>
<keyword id="KW-0443">Lipid metabolism</keyword>
<keyword id="KW-0472">Membrane</keyword>
<keyword id="KW-1185">Reference proteome</keyword>
<keyword id="KW-0735">Signal-anchor</keyword>
<keyword id="KW-0812">Transmembrane</keyword>
<keyword id="KW-1133">Transmembrane helix</keyword>
<accession>O60095</accession>
<reference evidence="6" key="1">
    <citation type="journal article" date="2002" name="Nature">
        <title>The genome sequence of Schizosaccharomyces pombe.</title>
        <authorList>
            <person name="Wood V."/>
            <person name="Gwilliam R."/>
            <person name="Rajandream M.A."/>
            <person name="Lyne M.H."/>
            <person name="Lyne R."/>
            <person name="Stewart A."/>
            <person name="Sgouros J.G."/>
            <person name="Peat N."/>
            <person name="Hayles J."/>
            <person name="Baker S.G."/>
            <person name="Basham D."/>
            <person name="Bowman S."/>
            <person name="Brooks K."/>
            <person name="Brown D."/>
            <person name="Brown S."/>
            <person name="Chillingworth T."/>
            <person name="Churcher C.M."/>
            <person name="Collins M."/>
            <person name="Connor R."/>
            <person name="Cronin A."/>
            <person name="Davis P."/>
            <person name="Feltwell T."/>
            <person name="Fraser A."/>
            <person name="Gentles S."/>
            <person name="Goble A."/>
            <person name="Hamlin N."/>
            <person name="Harris D.E."/>
            <person name="Hidalgo J."/>
            <person name="Hodgson G."/>
            <person name="Holroyd S."/>
            <person name="Hornsby T."/>
            <person name="Howarth S."/>
            <person name="Huckle E.J."/>
            <person name="Hunt S."/>
            <person name="Jagels K."/>
            <person name="James K.D."/>
            <person name="Jones L."/>
            <person name="Jones M."/>
            <person name="Leather S."/>
            <person name="McDonald S."/>
            <person name="McLean J."/>
            <person name="Mooney P."/>
            <person name="Moule S."/>
            <person name="Mungall K.L."/>
            <person name="Murphy L.D."/>
            <person name="Niblett D."/>
            <person name="Odell C."/>
            <person name="Oliver K."/>
            <person name="O'Neil S."/>
            <person name="Pearson D."/>
            <person name="Quail M.A."/>
            <person name="Rabbinowitsch E."/>
            <person name="Rutherford K.M."/>
            <person name="Rutter S."/>
            <person name="Saunders D."/>
            <person name="Seeger K."/>
            <person name="Sharp S."/>
            <person name="Skelton J."/>
            <person name="Simmonds M.N."/>
            <person name="Squares R."/>
            <person name="Squares S."/>
            <person name="Stevens K."/>
            <person name="Taylor K."/>
            <person name="Taylor R.G."/>
            <person name="Tivey A."/>
            <person name="Walsh S.V."/>
            <person name="Warren T."/>
            <person name="Whitehead S."/>
            <person name="Woodward J.R."/>
            <person name="Volckaert G."/>
            <person name="Aert R."/>
            <person name="Robben J."/>
            <person name="Grymonprez B."/>
            <person name="Weltjens I."/>
            <person name="Vanstreels E."/>
            <person name="Rieger M."/>
            <person name="Schaefer M."/>
            <person name="Mueller-Auer S."/>
            <person name="Gabel C."/>
            <person name="Fuchs M."/>
            <person name="Duesterhoeft A."/>
            <person name="Fritzc C."/>
            <person name="Holzer E."/>
            <person name="Moestl D."/>
            <person name="Hilbert H."/>
            <person name="Borzym K."/>
            <person name="Langer I."/>
            <person name="Beck A."/>
            <person name="Lehrach H."/>
            <person name="Reinhardt R."/>
            <person name="Pohl T.M."/>
            <person name="Eger P."/>
            <person name="Zimmermann W."/>
            <person name="Wedler H."/>
            <person name="Wambutt R."/>
            <person name="Purnelle B."/>
            <person name="Goffeau A."/>
            <person name="Cadieu E."/>
            <person name="Dreano S."/>
            <person name="Gloux S."/>
            <person name="Lelaure V."/>
            <person name="Mottier S."/>
            <person name="Galibert F."/>
            <person name="Aves S.J."/>
            <person name="Xiang Z."/>
            <person name="Hunt C."/>
            <person name="Moore K."/>
            <person name="Hurst S.M."/>
            <person name="Lucas M."/>
            <person name="Rochet M."/>
            <person name="Gaillardin C."/>
            <person name="Tallada V.A."/>
            <person name="Garzon A."/>
            <person name="Thode G."/>
            <person name="Daga R.R."/>
            <person name="Cruzado L."/>
            <person name="Jimenez J."/>
            <person name="Sanchez M."/>
            <person name="del Rey F."/>
            <person name="Benito J."/>
            <person name="Dominguez A."/>
            <person name="Revuelta J.L."/>
            <person name="Moreno S."/>
            <person name="Armstrong J."/>
            <person name="Forsburg S.L."/>
            <person name="Cerutti L."/>
            <person name="Lowe T."/>
            <person name="McCombie W.R."/>
            <person name="Paulsen I."/>
            <person name="Potashkin J."/>
            <person name="Shpakovski G.V."/>
            <person name="Ussery D."/>
            <person name="Barrell B.G."/>
            <person name="Nurse P."/>
        </authorList>
    </citation>
    <scope>NUCLEOTIDE SEQUENCE [LARGE SCALE GENOMIC DNA]</scope>
    <source>
        <strain>972 / ATCC 24843</strain>
    </source>
</reference>
<reference evidence="5" key="2">
    <citation type="journal article" date="2006" name="Nat. Biotechnol.">
        <title>ORFeome cloning and global analysis of protein localization in the fission yeast Schizosaccharomyces pombe.</title>
        <authorList>
            <person name="Matsuyama A."/>
            <person name="Arai R."/>
            <person name="Yashiroda Y."/>
            <person name="Shirai A."/>
            <person name="Kamata A."/>
            <person name="Sekido S."/>
            <person name="Kobayashi Y."/>
            <person name="Hashimoto A."/>
            <person name="Hamamoto M."/>
            <person name="Hiraoka Y."/>
            <person name="Horinouchi S."/>
            <person name="Yoshida M."/>
        </authorList>
    </citation>
    <scope>SUBCELLULAR LOCATION [LARGE SCALE ANALYSIS]</scope>
</reference>